<organism>
    <name type="scientific">Carboxydothermus hydrogenoformans (strain ATCC BAA-161 / DSM 6008 / Z-2901)</name>
    <dbReference type="NCBI Taxonomy" id="246194"/>
    <lineage>
        <taxon>Bacteria</taxon>
        <taxon>Bacillati</taxon>
        <taxon>Bacillota</taxon>
        <taxon>Clostridia</taxon>
        <taxon>Thermoanaerobacterales</taxon>
        <taxon>Thermoanaerobacteraceae</taxon>
        <taxon>Carboxydothermus</taxon>
    </lineage>
</organism>
<proteinExistence type="inferred from homology"/>
<keyword id="KW-0963">Cytoplasm</keyword>
<keyword id="KW-0238">DNA-binding</keyword>
<keyword id="KW-1185">Reference proteome</keyword>
<keyword id="KW-0677">Repeat</keyword>
<keyword id="KW-0804">Transcription</keyword>
<keyword id="KW-0805">Transcription regulation</keyword>
<reference key="1">
    <citation type="journal article" date="2005" name="PLoS Genet.">
        <title>Life in hot carbon monoxide: the complete genome sequence of Carboxydothermus hydrogenoformans Z-2901.</title>
        <authorList>
            <person name="Wu M."/>
            <person name="Ren Q."/>
            <person name="Durkin A.S."/>
            <person name="Daugherty S.C."/>
            <person name="Brinkac L.M."/>
            <person name="Dodson R.J."/>
            <person name="Madupu R."/>
            <person name="Sullivan S.A."/>
            <person name="Kolonay J.F."/>
            <person name="Nelson W.C."/>
            <person name="Tallon L.J."/>
            <person name="Jones K.M."/>
            <person name="Ulrich L.E."/>
            <person name="Gonzalez J.M."/>
            <person name="Zhulin I.B."/>
            <person name="Robb F.T."/>
            <person name="Eisen J.A."/>
        </authorList>
    </citation>
    <scope>NUCLEOTIDE SEQUENCE [LARGE SCALE GENOMIC DNA]</scope>
    <source>
        <strain>ATCC BAA-161 / DSM 6008 / Z-2901</strain>
    </source>
</reference>
<comment type="subunit">
    <text evidence="1">Forms oligomers.</text>
</comment>
<comment type="subcellular location">
    <subcellularLocation>
        <location evidence="1">Cytoplasm</location>
        <location evidence="1">Nucleoid</location>
    </subcellularLocation>
</comment>
<comment type="similarity">
    <text evidence="1">Belongs to the MraZ family.</text>
</comment>
<dbReference type="EMBL" id="CP000141">
    <property type="protein sequence ID" value="ABB13878.1"/>
    <property type="molecule type" value="Genomic_DNA"/>
</dbReference>
<dbReference type="RefSeq" id="WP_011344971.1">
    <property type="nucleotide sequence ID" value="NC_007503.1"/>
</dbReference>
<dbReference type="SMR" id="Q3AAD6"/>
<dbReference type="FunCoup" id="Q3AAD6">
    <property type="interactions" value="226"/>
</dbReference>
<dbReference type="STRING" id="246194.CHY_2079"/>
<dbReference type="KEGG" id="chy:CHY_2079"/>
<dbReference type="eggNOG" id="COG2001">
    <property type="taxonomic scope" value="Bacteria"/>
</dbReference>
<dbReference type="HOGENOM" id="CLU_107907_0_5_9"/>
<dbReference type="InParanoid" id="Q3AAD6"/>
<dbReference type="OrthoDB" id="9807753at2"/>
<dbReference type="Proteomes" id="UP000002706">
    <property type="component" value="Chromosome"/>
</dbReference>
<dbReference type="GO" id="GO:0005737">
    <property type="term" value="C:cytoplasm"/>
    <property type="evidence" value="ECO:0007669"/>
    <property type="project" value="UniProtKB-UniRule"/>
</dbReference>
<dbReference type="GO" id="GO:0009295">
    <property type="term" value="C:nucleoid"/>
    <property type="evidence" value="ECO:0007669"/>
    <property type="project" value="UniProtKB-SubCell"/>
</dbReference>
<dbReference type="GO" id="GO:0003700">
    <property type="term" value="F:DNA-binding transcription factor activity"/>
    <property type="evidence" value="ECO:0007669"/>
    <property type="project" value="UniProtKB-UniRule"/>
</dbReference>
<dbReference type="GO" id="GO:0000976">
    <property type="term" value="F:transcription cis-regulatory region binding"/>
    <property type="evidence" value="ECO:0007669"/>
    <property type="project" value="TreeGrafter"/>
</dbReference>
<dbReference type="GO" id="GO:2000143">
    <property type="term" value="P:negative regulation of DNA-templated transcription initiation"/>
    <property type="evidence" value="ECO:0007669"/>
    <property type="project" value="TreeGrafter"/>
</dbReference>
<dbReference type="CDD" id="cd16321">
    <property type="entry name" value="MraZ_C"/>
    <property type="match status" value="1"/>
</dbReference>
<dbReference type="CDD" id="cd16320">
    <property type="entry name" value="MraZ_N"/>
    <property type="match status" value="1"/>
</dbReference>
<dbReference type="FunFam" id="3.40.1550.20:FF:000002">
    <property type="entry name" value="Transcriptional regulator MraZ"/>
    <property type="match status" value="1"/>
</dbReference>
<dbReference type="Gene3D" id="3.40.1550.20">
    <property type="entry name" value="Transcriptional regulator MraZ domain"/>
    <property type="match status" value="1"/>
</dbReference>
<dbReference type="HAMAP" id="MF_01008">
    <property type="entry name" value="MraZ"/>
    <property type="match status" value="1"/>
</dbReference>
<dbReference type="InterPro" id="IPR003444">
    <property type="entry name" value="MraZ"/>
</dbReference>
<dbReference type="InterPro" id="IPR035644">
    <property type="entry name" value="MraZ_C"/>
</dbReference>
<dbReference type="InterPro" id="IPR020603">
    <property type="entry name" value="MraZ_dom"/>
</dbReference>
<dbReference type="InterPro" id="IPR035642">
    <property type="entry name" value="MraZ_N"/>
</dbReference>
<dbReference type="InterPro" id="IPR038619">
    <property type="entry name" value="MraZ_sf"/>
</dbReference>
<dbReference type="InterPro" id="IPR007159">
    <property type="entry name" value="SpoVT-AbrB_dom"/>
</dbReference>
<dbReference type="InterPro" id="IPR037914">
    <property type="entry name" value="SpoVT-AbrB_sf"/>
</dbReference>
<dbReference type="NCBIfam" id="TIGR00242">
    <property type="entry name" value="division/cell wall cluster transcriptional repressor MraZ"/>
    <property type="match status" value="1"/>
</dbReference>
<dbReference type="PANTHER" id="PTHR34701">
    <property type="entry name" value="TRANSCRIPTIONAL REGULATOR MRAZ"/>
    <property type="match status" value="1"/>
</dbReference>
<dbReference type="PANTHER" id="PTHR34701:SF1">
    <property type="entry name" value="TRANSCRIPTIONAL REGULATOR MRAZ"/>
    <property type="match status" value="1"/>
</dbReference>
<dbReference type="Pfam" id="PF02381">
    <property type="entry name" value="MraZ"/>
    <property type="match status" value="2"/>
</dbReference>
<dbReference type="SUPFAM" id="SSF89447">
    <property type="entry name" value="AbrB/MazE/MraZ-like"/>
    <property type="match status" value="1"/>
</dbReference>
<dbReference type="PROSITE" id="PS51740">
    <property type="entry name" value="SPOVT_ABRB"/>
    <property type="match status" value="2"/>
</dbReference>
<protein>
    <recommendedName>
        <fullName>Transcriptional regulator MraZ</fullName>
    </recommendedName>
</protein>
<evidence type="ECO:0000255" key="1">
    <source>
        <dbReference type="HAMAP-Rule" id="MF_01008"/>
    </source>
</evidence>
<evidence type="ECO:0000255" key="2">
    <source>
        <dbReference type="PROSITE-ProRule" id="PRU01076"/>
    </source>
</evidence>
<sequence length="143" mass="16593">MFMGEYSHTMDAKGRVFIPARFREELGEKFIVTKGLDHCLFVFPQKEWKVIEEKIKALPFTNQDARAFVRLFFAGAAECEQDKQGRVLLPNHLREYAKLDKEVVIVGVGTRVEIWSQELWNNYCNGAQAAYEEIAEKMVDFLL</sequence>
<accession>Q3AAD6</accession>
<name>MRAZ_CARHZ</name>
<feature type="chain" id="PRO_0000230080" description="Transcriptional regulator MraZ">
    <location>
        <begin position="1"/>
        <end position="143"/>
    </location>
</feature>
<feature type="domain" description="SpoVT-AbrB 1" evidence="2">
    <location>
        <begin position="5"/>
        <end position="47"/>
    </location>
</feature>
<feature type="domain" description="SpoVT-AbrB 2" evidence="2">
    <location>
        <begin position="76"/>
        <end position="119"/>
    </location>
</feature>
<gene>
    <name evidence="1" type="primary">mraZ</name>
    <name type="ordered locus">CHY_2079</name>
</gene>